<proteinExistence type="inferred from homology"/>
<name>RPOZ_RHOPS</name>
<sequence length="130" mass="14468">MARVTVEDCIDKVDNRFDLVLLAAHRARMISSGSQLTIDRDNDKNPVVSLREIAEQTVSPEDLREELVHSLQKFVEVDEPEQDTVPLIGSVGASVDADDTEVALERMTEEELLKGLEGLAPPEEQPEEDE</sequence>
<evidence type="ECO:0000255" key="1">
    <source>
        <dbReference type="HAMAP-Rule" id="MF_00366"/>
    </source>
</evidence>
<evidence type="ECO:0000256" key="2">
    <source>
        <dbReference type="SAM" id="MobiDB-lite"/>
    </source>
</evidence>
<dbReference type="EC" id="2.7.7.6" evidence="1"/>
<dbReference type="EMBL" id="CP000283">
    <property type="protein sequence ID" value="ABE39875.1"/>
    <property type="molecule type" value="Genomic_DNA"/>
</dbReference>
<dbReference type="SMR" id="Q136W4"/>
<dbReference type="STRING" id="316057.RPD_2646"/>
<dbReference type="KEGG" id="rpd:RPD_2646"/>
<dbReference type="eggNOG" id="COG1758">
    <property type="taxonomic scope" value="Bacteria"/>
</dbReference>
<dbReference type="HOGENOM" id="CLU_125406_2_0_5"/>
<dbReference type="BioCyc" id="RPAL316057:RPD_RS13310-MONOMER"/>
<dbReference type="Proteomes" id="UP000001818">
    <property type="component" value="Chromosome"/>
</dbReference>
<dbReference type="GO" id="GO:0000428">
    <property type="term" value="C:DNA-directed RNA polymerase complex"/>
    <property type="evidence" value="ECO:0007669"/>
    <property type="project" value="UniProtKB-KW"/>
</dbReference>
<dbReference type="GO" id="GO:0003677">
    <property type="term" value="F:DNA binding"/>
    <property type="evidence" value="ECO:0007669"/>
    <property type="project" value="UniProtKB-UniRule"/>
</dbReference>
<dbReference type="GO" id="GO:0003899">
    <property type="term" value="F:DNA-directed RNA polymerase activity"/>
    <property type="evidence" value="ECO:0007669"/>
    <property type="project" value="UniProtKB-UniRule"/>
</dbReference>
<dbReference type="GO" id="GO:0006351">
    <property type="term" value="P:DNA-templated transcription"/>
    <property type="evidence" value="ECO:0007669"/>
    <property type="project" value="UniProtKB-UniRule"/>
</dbReference>
<dbReference type="Gene3D" id="3.90.940.10">
    <property type="match status" value="1"/>
</dbReference>
<dbReference type="HAMAP" id="MF_00366">
    <property type="entry name" value="RNApol_bact_RpoZ"/>
    <property type="match status" value="1"/>
</dbReference>
<dbReference type="InterPro" id="IPR003716">
    <property type="entry name" value="DNA-dir_RNA_pol_omega"/>
</dbReference>
<dbReference type="InterPro" id="IPR006110">
    <property type="entry name" value="Pol_omega/Rpo6/RPB6"/>
</dbReference>
<dbReference type="InterPro" id="IPR036161">
    <property type="entry name" value="RPB6/omega-like_sf"/>
</dbReference>
<dbReference type="NCBIfam" id="TIGR00690">
    <property type="entry name" value="rpoZ"/>
    <property type="match status" value="1"/>
</dbReference>
<dbReference type="PANTHER" id="PTHR34476">
    <property type="entry name" value="DNA-DIRECTED RNA POLYMERASE SUBUNIT OMEGA"/>
    <property type="match status" value="1"/>
</dbReference>
<dbReference type="PANTHER" id="PTHR34476:SF1">
    <property type="entry name" value="DNA-DIRECTED RNA POLYMERASE SUBUNIT OMEGA"/>
    <property type="match status" value="1"/>
</dbReference>
<dbReference type="Pfam" id="PF01192">
    <property type="entry name" value="RNA_pol_Rpb6"/>
    <property type="match status" value="1"/>
</dbReference>
<dbReference type="SMART" id="SM01409">
    <property type="entry name" value="RNA_pol_Rpb6"/>
    <property type="match status" value="1"/>
</dbReference>
<dbReference type="SUPFAM" id="SSF63562">
    <property type="entry name" value="RPB6/omega subunit-like"/>
    <property type="match status" value="1"/>
</dbReference>
<organism>
    <name type="scientific">Rhodopseudomonas palustris (strain BisB5)</name>
    <dbReference type="NCBI Taxonomy" id="316057"/>
    <lineage>
        <taxon>Bacteria</taxon>
        <taxon>Pseudomonadati</taxon>
        <taxon>Pseudomonadota</taxon>
        <taxon>Alphaproteobacteria</taxon>
        <taxon>Hyphomicrobiales</taxon>
        <taxon>Nitrobacteraceae</taxon>
        <taxon>Rhodopseudomonas</taxon>
    </lineage>
</organism>
<keyword id="KW-0240">DNA-directed RNA polymerase</keyword>
<keyword id="KW-0548">Nucleotidyltransferase</keyword>
<keyword id="KW-0804">Transcription</keyword>
<keyword id="KW-0808">Transferase</keyword>
<accession>Q136W4</accession>
<comment type="function">
    <text evidence="1">Promotes RNA polymerase assembly. Latches the N- and C-terminal regions of the beta' subunit thereby facilitating its interaction with the beta and alpha subunits.</text>
</comment>
<comment type="catalytic activity">
    <reaction evidence="1">
        <text>RNA(n) + a ribonucleoside 5'-triphosphate = RNA(n+1) + diphosphate</text>
        <dbReference type="Rhea" id="RHEA:21248"/>
        <dbReference type="Rhea" id="RHEA-COMP:14527"/>
        <dbReference type="Rhea" id="RHEA-COMP:17342"/>
        <dbReference type="ChEBI" id="CHEBI:33019"/>
        <dbReference type="ChEBI" id="CHEBI:61557"/>
        <dbReference type="ChEBI" id="CHEBI:140395"/>
        <dbReference type="EC" id="2.7.7.6"/>
    </reaction>
</comment>
<comment type="subunit">
    <text evidence="1">The RNAP catalytic core consists of 2 alpha, 1 beta, 1 beta' and 1 omega subunit. When a sigma factor is associated with the core the holoenzyme is formed, which can initiate transcription.</text>
</comment>
<comment type="similarity">
    <text evidence="1">Belongs to the RNA polymerase subunit omega family.</text>
</comment>
<feature type="chain" id="PRO_1000005993" description="DNA-directed RNA polymerase subunit omega">
    <location>
        <begin position="1"/>
        <end position="130"/>
    </location>
</feature>
<feature type="region of interest" description="Disordered" evidence="2">
    <location>
        <begin position="109"/>
        <end position="130"/>
    </location>
</feature>
<reference key="1">
    <citation type="submission" date="2006-03" db="EMBL/GenBank/DDBJ databases">
        <title>Complete sequence of Rhodopseudomonas palustris BisB5.</title>
        <authorList>
            <consortium name="US DOE Joint Genome Institute"/>
            <person name="Copeland A."/>
            <person name="Lucas S."/>
            <person name="Lapidus A."/>
            <person name="Barry K."/>
            <person name="Detter J.C."/>
            <person name="Glavina del Rio T."/>
            <person name="Hammon N."/>
            <person name="Israni S."/>
            <person name="Dalin E."/>
            <person name="Tice H."/>
            <person name="Pitluck S."/>
            <person name="Chain P."/>
            <person name="Malfatti S."/>
            <person name="Shin M."/>
            <person name="Vergez L."/>
            <person name="Schmutz J."/>
            <person name="Larimer F."/>
            <person name="Land M."/>
            <person name="Hauser L."/>
            <person name="Pelletier D.A."/>
            <person name="Kyrpides N."/>
            <person name="Lykidis A."/>
            <person name="Oda Y."/>
            <person name="Harwood C.S."/>
            <person name="Richardson P."/>
        </authorList>
    </citation>
    <scope>NUCLEOTIDE SEQUENCE [LARGE SCALE GENOMIC DNA]</scope>
    <source>
        <strain>BisB5</strain>
    </source>
</reference>
<gene>
    <name evidence="1" type="primary">rpoZ</name>
    <name type="ordered locus">RPD_2646</name>
</gene>
<protein>
    <recommendedName>
        <fullName evidence="1">DNA-directed RNA polymerase subunit omega</fullName>
        <shortName evidence="1">RNAP omega subunit</shortName>
        <ecNumber evidence="1">2.7.7.6</ecNumber>
    </recommendedName>
    <alternativeName>
        <fullName evidence="1">RNA polymerase omega subunit</fullName>
    </alternativeName>
    <alternativeName>
        <fullName evidence="1">Transcriptase subunit omega</fullName>
    </alternativeName>
</protein>